<organism>
    <name type="scientific">Acidithiobacillus ferrooxidans (strain ATCC 53993 / BNL-5-31)</name>
    <name type="common">Leptospirillum ferrooxidans (ATCC 53993)</name>
    <dbReference type="NCBI Taxonomy" id="380394"/>
    <lineage>
        <taxon>Bacteria</taxon>
        <taxon>Pseudomonadati</taxon>
        <taxon>Pseudomonadota</taxon>
        <taxon>Acidithiobacillia</taxon>
        <taxon>Acidithiobacillales</taxon>
        <taxon>Acidithiobacillaceae</taxon>
        <taxon>Acidithiobacillus</taxon>
    </lineage>
</organism>
<evidence type="ECO:0000255" key="1">
    <source>
        <dbReference type="HAMAP-Rule" id="MF_00632"/>
    </source>
</evidence>
<name>Y1091_ACIF5</name>
<reference key="1">
    <citation type="submission" date="2008-08" db="EMBL/GenBank/DDBJ databases">
        <title>Complete sequence of Acidithiobacillus ferrooxidans ATCC 53993.</title>
        <authorList>
            <person name="Lucas S."/>
            <person name="Copeland A."/>
            <person name="Lapidus A."/>
            <person name="Glavina del Rio T."/>
            <person name="Dalin E."/>
            <person name="Tice H."/>
            <person name="Bruce D."/>
            <person name="Goodwin L."/>
            <person name="Pitluck S."/>
            <person name="Sims D."/>
            <person name="Brettin T."/>
            <person name="Detter J.C."/>
            <person name="Han C."/>
            <person name="Kuske C.R."/>
            <person name="Larimer F."/>
            <person name="Land M."/>
            <person name="Hauser L."/>
            <person name="Kyrpides N."/>
            <person name="Lykidis A."/>
            <person name="Borole A.P."/>
        </authorList>
    </citation>
    <scope>NUCLEOTIDE SEQUENCE [LARGE SCALE GENOMIC DNA]</scope>
    <source>
        <strain>ATCC 53993 / BNL-5-31</strain>
    </source>
</reference>
<protein>
    <recommendedName>
        <fullName evidence="1">Nucleotide-binding protein Lferr_1091</fullName>
    </recommendedName>
</protein>
<comment type="function">
    <text evidence="1">Nucleotide-binding protein.</text>
</comment>
<comment type="similarity">
    <text evidence="1">Belongs to the YajQ family.</text>
</comment>
<sequence>MPSFDVVSEVDMQEVDNALHTTVKEITTRYDFKGSKASMERKEKEIILVAEDEYKLGQMIDLLSARLVKRGVDLKALEVGKVAAAAGGMERQVLSLKVGLETEVSKRMIKFLKDGKFKAQGSIQGDQLRVSGKSRDELQAAIAALRGHDFGLPVQFTNFRD</sequence>
<gene>
    <name type="ordered locus">Lferr_1091</name>
</gene>
<accession>B5EQ88</accession>
<feature type="chain" id="PRO_1000130592" description="Nucleotide-binding protein Lferr_1091">
    <location>
        <begin position="1"/>
        <end position="161"/>
    </location>
</feature>
<dbReference type="EMBL" id="CP001132">
    <property type="protein sequence ID" value="ACH83333.1"/>
    <property type="molecule type" value="Genomic_DNA"/>
</dbReference>
<dbReference type="RefSeq" id="WP_009568900.1">
    <property type="nucleotide sequence ID" value="NC_011206.1"/>
</dbReference>
<dbReference type="SMR" id="B5EQ88"/>
<dbReference type="KEGG" id="afe:Lferr_1091"/>
<dbReference type="eggNOG" id="COG1666">
    <property type="taxonomic scope" value="Bacteria"/>
</dbReference>
<dbReference type="HOGENOM" id="CLU_099839_1_0_6"/>
<dbReference type="GO" id="GO:0005829">
    <property type="term" value="C:cytosol"/>
    <property type="evidence" value="ECO:0007669"/>
    <property type="project" value="TreeGrafter"/>
</dbReference>
<dbReference type="GO" id="GO:0000166">
    <property type="term" value="F:nucleotide binding"/>
    <property type="evidence" value="ECO:0007669"/>
    <property type="project" value="TreeGrafter"/>
</dbReference>
<dbReference type="CDD" id="cd11740">
    <property type="entry name" value="YajQ_like"/>
    <property type="match status" value="1"/>
</dbReference>
<dbReference type="Gene3D" id="3.30.70.860">
    <property type="match status" value="1"/>
</dbReference>
<dbReference type="Gene3D" id="3.30.70.990">
    <property type="entry name" value="YajQ-like, domain 2"/>
    <property type="match status" value="1"/>
</dbReference>
<dbReference type="HAMAP" id="MF_00632">
    <property type="entry name" value="YajQ"/>
    <property type="match status" value="1"/>
</dbReference>
<dbReference type="InterPro" id="IPR007551">
    <property type="entry name" value="DUF520"/>
</dbReference>
<dbReference type="InterPro" id="IPR035571">
    <property type="entry name" value="UPF0234-like_C"/>
</dbReference>
<dbReference type="InterPro" id="IPR035570">
    <property type="entry name" value="UPF0234_N"/>
</dbReference>
<dbReference type="InterPro" id="IPR036183">
    <property type="entry name" value="YajQ-like_sf"/>
</dbReference>
<dbReference type="NCBIfam" id="NF003819">
    <property type="entry name" value="PRK05412.1"/>
    <property type="match status" value="1"/>
</dbReference>
<dbReference type="PANTHER" id="PTHR30476">
    <property type="entry name" value="UPF0234 PROTEIN YAJQ"/>
    <property type="match status" value="1"/>
</dbReference>
<dbReference type="PANTHER" id="PTHR30476:SF0">
    <property type="entry name" value="UPF0234 PROTEIN YAJQ"/>
    <property type="match status" value="1"/>
</dbReference>
<dbReference type="Pfam" id="PF04461">
    <property type="entry name" value="DUF520"/>
    <property type="match status" value="1"/>
</dbReference>
<dbReference type="SUPFAM" id="SSF89963">
    <property type="entry name" value="YajQ-like"/>
    <property type="match status" value="2"/>
</dbReference>
<keyword id="KW-0547">Nucleotide-binding</keyword>
<proteinExistence type="inferred from homology"/>